<reference key="1">
    <citation type="journal article" date="2001" name="Cytogenet. Cell Genet.">
        <title>Human and mouse orthologs of a new ATP-binding cassette gene, ABCG4.</title>
        <authorList>
            <person name="Annilo T."/>
            <person name="Tammur J."/>
            <person name="Hutchinson A."/>
            <person name="Rzhetsky A."/>
            <person name="Dean M."/>
            <person name="Allikmets R."/>
        </authorList>
    </citation>
    <scope>NUCLEOTIDE SEQUENCE [MRNA]</scope>
    <scope>TISSUE SPECIFICITY</scope>
</reference>
<reference key="2">
    <citation type="submission" date="2001-05" db="EMBL/GenBank/DDBJ databases">
        <title>Cloning and expression analysis of a novel ABC transporter, White2, that is expressed in the mouse retina.</title>
        <authorList>
            <person name="Kameya S."/>
            <person name="Naggert J.K."/>
            <person name="Nishina P.M."/>
        </authorList>
    </citation>
    <scope>NUCLEOTIDE SEQUENCE</scope>
    <scope>NUCLEOTIDE SEQUENCE [MRNA]</scope>
    <source>
        <strain>C57BL/6J</strain>
    </source>
</reference>
<reference key="3">
    <citation type="journal article" date="2002" name="Biochim. Biophys. Acta">
        <title>ABCG4: a novel human white family ABC-transporter expressed in the brain and eye.</title>
        <authorList>
            <person name="Oldfield S."/>
            <person name="Lowry C."/>
            <person name="Ruddick J."/>
            <person name="Lightman S."/>
        </authorList>
    </citation>
    <scope>NUCLEOTIDE SEQUENCE [MRNA]</scope>
    <scope>TISSUE SPECIFICITY</scope>
    <source>
        <tissue>Retina</tissue>
    </source>
</reference>
<reference key="4">
    <citation type="journal article" date="2002" name="Gene">
        <title>Molecular and cytogenetic characterization of the mouse ATP-binding cassette transporter Abcg4.</title>
        <authorList>
            <person name="Yoshikawa M."/>
            <person name="Yabuuchi H."/>
            <person name="Kuroiwa A."/>
            <person name="Ikegami Y."/>
            <person name="Sai Y."/>
            <person name="Tamai I."/>
            <person name="Tsuji A."/>
            <person name="Matsuda Y."/>
            <person name="Yoshida H."/>
            <person name="Ishikawa T."/>
        </authorList>
    </citation>
    <scope>NUCLEOTIDE SEQUENCE [MRNA]</scope>
    <source>
        <strain>BALB/cJ</strain>
        <tissue>Brain</tissue>
    </source>
</reference>
<reference key="5">
    <citation type="submission" date="2001-09" db="EMBL/GenBank/DDBJ databases">
        <title>Genomic organization, expression and charectarization of murine ABCG4 gene.</title>
        <authorList>
            <person name="Lu K."/>
            <person name="Patel S.B."/>
        </authorList>
    </citation>
    <scope>NUCLEOTIDE SEQUENCE [GENOMIC DNA / MRNA]</scope>
    <source>
        <strain>129</strain>
    </source>
</reference>
<reference key="6">
    <citation type="journal article" date="2009" name="PLoS Biol.">
        <title>Lineage-specific biology revealed by a finished genome assembly of the mouse.</title>
        <authorList>
            <person name="Church D.M."/>
            <person name="Goodstadt L."/>
            <person name="Hillier L.W."/>
            <person name="Zody M.C."/>
            <person name="Goldstein S."/>
            <person name="She X."/>
            <person name="Bult C.J."/>
            <person name="Agarwala R."/>
            <person name="Cherry J.L."/>
            <person name="DiCuccio M."/>
            <person name="Hlavina W."/>
            <person name="Kapustin Y."/>
            <person name="Meric P."/>
            <person name="Maglott D."/>
            <person name="Birtle Z."/>
            <person name="Marques A.C."/>
            <person name="Graves T."/>
            <person name="Zhou S."/>
            <person name="Teague B."/>
            <person name="Potamousis K."/>
            <person name="Churas C."/>
            <person name="Place M."/>
            <person name="Herschleb J."/>
            <person name="Runnheim R."/>
            <person name="Forrest D."/>
            <person name="Amos-Landgraf J."/>
            <person name="Schwartz D.C."/>
            <person name="Cheng Z."/>
            <person name="Lindblad-Toh K."/>
            <person name="Eichler E.E."/>
            <person name="Ponting C.P."/>
        </authorList>
    </citation>
    <scope>NUCLEOTIDE SEQUENCE [LARGE SCALE GENOMIC DNA]</scope>
    <source>
        <strain>C57BL/6J</strain>
    </source>
</reference>
<reference key="7">
    <citation type="journal article" date="2004" name="Genome Res.">
        <title>The status, quality, and expansion of the NIH full-length cDNA project: the Mammalian Gene Collection (MGC).</title>
        <authorList>
            <consortium name="The MGC Project Team"/>
        </authorList>
    </citation>
    <scope>NUCLEOTIDE SEQUENCE [LARGE SCALE MRNA]</scope>
    <source>
        <tissue>Eye</tissue>
    </source>
</reference>
<reference key="8">
    <citation type="journal article" date="2004" name="Proc. Natl. Acad. Sci. U.S.A.">
        <title>ATP-binding cassette transporters G1 and G4 mediate cellular cholesterol efflux to high-density lipoproteins.</title>
        <authorList>
            <person name="Wang N."/>
            <person name="Lan D."/>
            <person name="Chen W."/>
            <person name="Matsuura F."/>
            <person name="Tall A.R."/>
        </authorList>
    </citation>
    <scope>FUNCTION</scope>
    <scope>CATALYTIC ACTIVITY</scope>
</reference>
<reference key="9">
    <citation type="journal article" date="2008" name="FASEB J.">
        <title>ATP-binding cassette transporters G1 and G4 mediate cholesterol and desmosterol efflux to HDL and regulate sterol accumulation in the brain.</title>
        <authorList>
            <person name="Wang N."/>
            <person name="Yvan-Charvet L."/>
            <person name="Luetjohann D."/>
            <person name="Mulder M."/>
            <person name="Vanmierlo T."/>
            <person name="Kim T.W."/>
            <person name="Tall A.R."/>
        </authorList>
    </citation>
    <scope>DISRUPTION PHENOTYPE</scope>
    <scope>FUNCTION</scope>
    <scope>TISSUE SPECIFICITY</scope>
    <scope>CATALYTIC ACTIVITY</scope>
</reference>
<reference key="10">
    <citation type="journal article" date="2008" name="J. Lipid Res.">
        <title>ABCG1 and ABCG4 are coexpressed in neurons and astrocytes of the CNS and regulate cholesterol homeostasis through SREBP-2.</title>
        <authorList>
            <person name="Tarr P.T."/>
            <person name="Edwards P.A."/>
        </authorList>
    </citation>
    <scope>MISCELLANEOUS</scope>
    <scope>TISSUE SPECIFICITY</scope>
    <scope>SUBCELLULAR LOCATION</scope>
    <scope>CATALYTIC ACTIVITY</scope>
    <scope>FUNCTION</scope>
</reference>
<reference key="11">
    <citation type="journal article" date="2010" name="J. Lipid Res.">
        <title>Differential expression and function of ABCG1 and ABCG4 during development and aging.</title>
        <authorList>
            <person name="Bojanic D.D."/>
            <person name="Tarr P.T."/>
            <person name="Gale G.D."/>
            <person name="Smith D.J."/>
            <person name="Bok D."/>
            <person name="Chen B."/>
            <person name="Nusinowitz S."/>
            <person name="Loevgren-Sandblom A."/>
            <person name="Bjoerkhem I."/>
            <person name="Edwards P.A."/>
        </authorList>
    </citation>
    <scope>DEVELOPMENTAL STAGE</scope>
    <scope>DISRUPTION PHENOTYPE</scope>
</reference>
<reference key="12">
    <citation type="journal article" date="2017" name="Sci. Rep.">
        <title>Expression and function of Abcg4 in the mouse blood-brain barrier: role in restricting the brain entry of amyloid-beta peptide.</title>
        <authorList>
            <person name="Dodacki A."/>
            <person name="Wortman M."/>
            <person name="Saubamea B."/>
            <person name="Chasseigneaux S."/>
            <person name="Nicolic S."/>
            <person name="Prince N."/>
            <person name="Lochus M."/>
            <person name="Raveu A.L."/>
            <person name="Decleves X."/>
            <person name="Scherrmann J.M."/>
            <person name="Patel S.B."/>
            <person name="Bourasset F."/>
        </authorList>
    </citation>
    <scope>FUNCTION</scope>
    <scope>SUBCELLULAR LOCATION</scope>
    <scope>TISSUE SPECIFICITY</scope>
</reference>
<feature type="chain" id="PRO_0000453165" description="ATP-binding cassette subfamily G member 4">
    <location>
        <begin position="1"/>
        <end position="646"/>
    </location>
</feature>
<feature type="topological domain" description="Cytoplasmic" evidence="3">
    <location>
        <begin position="1"/>
        <end position="393"/>
    </location>
</feature>
<feature type="transmembrane region" description="Helical; Name=1" evidence="3">
    <location>
        <begin position="394"/>
        <end position="414"/>
    </location>
</feature>
<feature type="topological domain" description="Extracellular" evidence="3">
    <location>
        <begin position="415"/>
        <end position="425"/>
    </location>
</feature>
<feature type="transmembrane region" description="Helical; Name=2" evidence="3">
    <location>
        <begin position="426"/>
        <end position="446"/>
    </location>
</feature>
<feature type="topological domain" description="Cytoplasmic" evidence="3">
    <location>
        <begin position="447"/>
        <end position="472"/>
    </location>
</feature>
<feature type="transmembrane region" description="Helical; Name=3" evidence="3">
    <location>
        <begin position="473"/>
        <end position="493"/>
    </location>
</feature>
<feature type="topological domain" description="Extracellular" evidence="3">
    <location>
        <begin position="494"/>
        <end position="503"/>
    </location>
</feature>
<feature type="transmembrane region" description="Helical; Name=4" evidence="3">
    <location>
        <begin position="504"/>
        <end position="524"/>
    </location>
</feature>
<feature type="topological domain" description="Cytoplasmic" evidence="3">
    <location>
        <begin position="525"/>
        <end position="532"/>
    </location>
</feature>
<feature type="transmembrane region" description="Helical; Name=5" evidence="3">
    <location>
        <begin position="533"/>
        <end position="553"/>
    </location>
</feature>
<feature type="topological domain" description="Extracellular" evidence="3">
    <location>
        <begin position="554"/>
        <end position="617"/>
    </location>
</feature>
<feature type="transmembrane region" description="Helical; Name=6" evidence="3">
    <location>
        <begin position="618"/>
        <end position="638"/>
    </location>
</feature>
<feature type="topological domain" description="Cytoplasmic" evidence="3">
    <location>
        <begin position="639"/>
        <end position="646"/>
    </location>
</feature>
<feature type="domain" description="ABC transporter" evidence="4">
    <location>
        <begin position="61"/>
        <end position="301"/>
    </location>
</feature>
<feature type="binding site" evidence="4">
    <location>
        <begin position="102"/>
        <end position="109"/>
    </location>
    <ligand>
        <name>ATP</name>
        <dbReference type="ChEBI" id="CHEBI:30616"/>
    </ligand>
</feature>
<feature type="sequence conflict" description="In Ref. 5; AAN03012/AAN31516." evidence="13" ref="5">
    <original>DPQ</original>
    <variation>GPT</variation>
    <location>
        <begin position="601"/>
        <end position="603"/>
    </location>
</feature>
<evidence type="ECO:0000250" key="1">
    <source>
        <dbReference type="UniProtKB" id="D3ZCM3"/>
    </source>
</evidence>
<evidence type="ECO:0000250" key="2">
    <source>
        <dbReference type="UniProtKB" id="Q9H172"/>
    </source>
</evidence>
<evidence type="ECO:0000255" key="3"/>
<evidence type="ECO:0000255" key="4">
    <source>
        <dbReference type="PROSITE-ProRule" id="PRU00434"/>
    </source>
</evidence>
<evidence type="ECO:0000269" key="5">
    <source>
    </source>
</evidence>
<evidence type="ECO:0000269" key="6">
    <source>
    </source>
</evidence>
<evidence type="ECO:0000269" key="7">
    <source>
    </source>
</evidence>
<evidence type="ECO:0000269" key="8">
    <source>
    </source>
</evidence>
<evidence type="ECO:0000269" key="9">
    <source>
    </source>
</evidence>
<evidence type="ECO:0000269" key="10">
    <source>
    </source>
</evidence>
<evidence type="ECO:0000269" key="11">
    <source>
    </source>
</evidence>
<evidence type="ECO:0000303" key="12">
    <source ref="2"/>
</evidence>
<evidence type="ECO:0000305" key="13"/>
<evidence type="ECO:0000305" key="14">
    <source>
    </source>
</evidence>
<evidence type="ECO:0000305" key="15">
    <source>
    </source>
</evidence>
<evidence type="ECO:0000312" key="16">
    <source>
        <dbReference type="MGI" id="MGI:1890594"/>
    </source>
</evidence>
<name>ABCG4_MOUSE</name>
<sequence length="646" mass="72098">MAEKALEAVGCGLGPGAVAMAVTLEDGAEPPVLTTHLKKVENHITEAQRFSHLPKRSAVDIEFVELSYSVREGPCWRKRGYKTLLKCLSGKFCRRELIGIMGPSGAGKSTFMNILAGYRESGMKGQILVNGRPRELRTFRKMSCYIMQDDMLLPHLTVLEAMMVSANLKLSEKQEVKKELVTEILTALGLMSCSHTRTALLSGGQRKRLAIALELVNNPPVMFFDEPTSGLDSASCFQVVSLMKSLAHGGRTVICTIHQPSAKLFEMFDKLYILSQGQCIFKGVVTNLIPYLKGLGLHCPTYHNPADFIIEVASGEYGDLNPMLFRAVQNGLCTMAEKKSSPGKNELPAHCPTCPPELDPIESHTFATSTLTQFCILFRRTFLSILRDTVLTHLRFMSHVLIGVLIGLLYLHIGDDASKVFNNTGFLFFSMLFLMFAALMPTVLTFPLEMAVFMREHLNYWYTLKAYYLAKTMADVPFQVVCPVVYCSIVYWMTGQPAETSRFLLFSALAIATALVAQSLGLLIGAASTSLQVATFVGPVTAIPVLLFSGFFVSFKTIPTYLQWSSYLSYVRYGFEGLILTIYGMERGHLTCLDEQCPFRDPQIILRELDVEEAKLYMDFLVLGIFFLALRLLAYLVLRYRVKSER</sequence>
<accession>Q91WA9</accession>
<accession>Q8K4E1</accession>
<accession>Q8VBS9</accession>
<protein>
    <recommendedName>
        <fullName>ATP-binding cassette subfamily G member 4</fullName>
        <ecNumber evidence="7 8 9">7.6.2.-</ecNumber>
    </recommendedName>
    <alternativeName>
        <fullName evidence="12">ATP-binding cassette transporter White2</fullName>
    </alternativeName>
</protein>
<dbReference type="EC" id="7.6.2.-" evidence="7 8 9"/>
<dbReference type="EMBL" id="AY040865">
    <property type="protein sequence ID" value="AAK91781.1"/>
    <property type="molecule type" value="mRNA"/>
</dbReference>
<dbReference type="EMBL" id="AF411084">
    <property type="protein sequence ID" value="AAL57369.1"/>
    <property type="molecule type" value="mRNA"/>
</dbReference>
<dbReference type="EMBL" id="AF378330">
    <property type="protein sequence ID" value="AAO13805.1"/>
    <property type="molecule type" value="mRNA"/>
</dbReference>
<dbReference type="EMBL" id="AJ426047">
    <property type="protein sequence ID" value="CAD19779.2"/>
    <property type="molecule type" value="mRNA"/>
</dbReference>
<dbReference type="EMBL" id="AF425077">
    <property type="protein sequence ID" value="AAN03012.1"/>
    <property type="molecule type" value="mRNA"/>
</dbReference>
<dbReference type="EMBL" id="AH011944">
    <property type="protein sequence ID" value="AAN31516.1"/>
    <property type="molecule type" value="Genomic_DNA"/>
</dbReference>
<dbReference type="EMBL" id="AF425078">
    <property type="protein sequence ID" value="AAN31516.1"/>
    <property type="status" value="JOINED"/>
    <property type="molecule type" value="Genomic_DNA"/>
</dbReference>
<dbReference type="EMBL" id="AC124577">
    <property type="status" value="NOT_ANNOTATED_CDS"/>
    <property type="molecule type" value="Genomic_DNA"/>
</dbReference>
<dbReference type="EMBL" id="BC016200">
    <property type="protein sequence ID" value="AAH16200.2"/>
    <property type="molecule type" value="mRNA"/>
</dbReference>
<dbReference type="CCDS" id="CCDS23101.1"/>
<dbReference type="RefSeq" id="NP_620405.3">
    <property type="nucleotide sequence ID" value="NM_138955.3"/>
</dbReference>
<dbReference type="RefSeq" id="XP_011240723.1">
    <property type="nucleotide sequence ID" value="XM_011242421.3"/>
</dbReference>
<dbReference type="SMR" id="Q91WA9"/>
<dbReference type="CORUM" id="Q91WA9"/>
<dbReference type="FunCoup" id="Q91WA9">
    <property type="interactions" value="908"/>
</dbReference>
<dbReference type="STRING" id="10090.ENSMUSP00000124647"/>
<dbReference type="iPTMnet" id="Q91WA9"/>
<dbReference type="PhosphoSitePlus" id="Q91WA9"/>
<dbReference type="PaxDb" id="10090-ENSMUSP00000124647"/>
<dbReference type="ProteomicsDB" id="335265"/>
<dbReference type="Antibodypedia" id="32624">
    <property type="antibodies" value="195 antibodies from 31 providers"/>
</dbReference>
<dbReference type="DNASU" id="192663"/>
<dbReference type="Ensembl" id="ENSMUST00000034648.16">
    <property type="protein sequence ID" value="ENSMUSP00000034648.10"/>
    <property type="gene ID" value="ENSMUSG00000032131.17"/>
</dbReference>
<dbReference type="Ensembl" id="ENSMUST00000161354.9">
    <property type="protein sequence ID" value="ENSMUSP00000124647.2"/>
    <property type="gene ID" value="ENSMUSG00000032131.17"/>
</dbReference>
<dbReference type="GeneID" id="192663"/>
<dbReference type="KEGG" id="mmu:192663"/>
<dbReference type="UCSC" id="uc009pcp.1">
    <property type="organism name" value="mouse"/>
</dbReference>
<dbReference type="AGR" id="MGI:1890594"/>
<dbReference type="CTD" id="64137"/>
<dbReference type="MGI" id="MGI:1890594">
    <property type="gene designation" value="Abcg4"/>
</dbReference>
<dbReference type="VEuPathDB" id="HostDB:ENSMUSG00000032131"/>
<dbReference type="eggNOG" id="KOG0061">
    <property type="taxonomic scope" value="Eukaryota"/>
</dbReference>
<dbReference type="GeneTree" id="ENSGT00940000157853"/>
<dbReference type="HOGENOM" id="CLU_000604_57_6_1"/>
<dbReference type="InParanoid" id="Q91WA9"/>
<dbReference type="OMA" id="WIDVCIM"/>
<dbReference type="OrthoDB" id="66620at2759"/>
<dbReference type="PhylomeDB" id="Q91WA9"/>
<dbReference type="TreeFam" id="TF105210"/>
<dbReference type="Reactome" id="R-MMU-1369062">
    <property type="pathway name" value="ABC transporters in lipid homeostasis"/>
</dbReference>
<dbReference type="BioGRID-ORCS" id="192663">
    <property type="hits" value="2 hits in 77 CRISPR screens"/>
</dbReference>
<dbReference type="ChiTaRS" id="Abcg4">
    <property type="organism name" value="mouse"/>
</dbReference>
<dbReference type="PRO" id="PR:Q91WA9"/>
<dbReference type="Proteomes" id="UP000000589">
    <property type="component" value="Chromosome 9"/>
</dbReference>
<dbReference type="RNAct" id="Q91WA9">
    <property type="molecule type" value="protein"/>
</dbReference>
<dbReference type="Bgee" id="ENSMUSG00000032131">
    <property type="expression patterns" value="Expressed in retinal neural layer and 151 other cell types or tissues"/>
</dbReference>
<dbReference type="ExpressionAtlas" id="Q91WA9">
    <property type="expression patterns" value="baseline and differential"/>
</dbReference>
<dbReference type="GO" id="GO:0031410">
    <property type="term" value="C:cytoplasmic vesicle"/>
    <property type="evidence" value="ECO:0000314"/>
    <property type="project" value="UniProtKB"/>
</dbReference>
<dbReference type="GO" id="GO:0005768">
    <property type="term" value="C:endosome"/>
    <property type="evidence" value="ECO:0000314"/>
    <property type="project" value="BHF-UCL"/>
</dbReference>
<dbReference type="GO" id="GO:0010008">
    <property type="term" value="C:endosome membrane"/>
    <property type="evidence" value="ECO:0000314"/>
    <property type="project" value="UniProtKB"/>
</dbReference>
<dbReference type="GO" id="GO:0005886">
    <property type="term" value="C:plasma membrane"/>
    <property type="evidence" value="ECO:0007669"/>
    <property type="project" value="UniProtKB-SubCell"/>
</dbReference>
<dbReference type="GO" id="GO:0034041">
    <property type="term" value="F:ABC-type sterol transporter activity"/>
    <property type="evidence" value="ECO:0000315"/>
    <property type="project" value="UniProtKB"/>
</dbReference>
<dbReference type="GO" id="GO:0005524">
    <property type="term" value="F:ATP binding"/>
    <property type="evidence" value="ECO:0007669"/>
    <property type="project" value="UniProtKB-KW"/>
</dbReference>
<dbReference type="GO" id="GO:0016887">
    <property type="term" value="F:ATP hydrolysis activity"/>
    <property type="evidence" value="ECO:0007669"/>
    <property type="project" value="Ensembl"/>
</dbReference>
<dbReference type="GO" id="GO:0046982">
    <property type="term" value="F:protein heterodimerization activity"/>
    <property type="evidence" value="ECO:0007669"/>
    <property type="project" value="Ensembl"/>
</dbReference>
<dbReference type="GO" id="GO:0042803">
    <property type="term" value="F:protein homodimerization activity"/>
    <property type="evidence" value="ECO:0007669"/>
    <property type="project" value="Ensembl"/>
</dbReference>
<dbReference type="GO" id="GO:0071403">
    <property type="term" value="P:cellular response to high density lipoprotein particle stimulus"/>
    <property type="evidence" value="ECO:0000314"/>
    <property type="project" value="BHF-UCL"/>
</dbReference>
<dbReference type="GO" id="GO:1990830">
    <property type="term" value="P:cellular response to leukemia inhibitory factor"/>
    <property type="evidence" value="ECO:0000270"/>
    <property type="project" value="MGI"/>
</dbReference>
<dbReference type="GO" id="GO:0033344">
    <property type="term" value="P:cholesterol efflux"/>
    <property type="evidence" value="ECO:0000315"/>
    <property type="project" value="UniProtKB"/>
</dbReference>
<dbReference type="GO" id="GO:0042632">
    <property type="term" value="P:cholesterol homeostasis"/>
    <property type="evidence" value="ECO:0000315"/>
    <property type="project" value="UniProtKB"/>
</dbReference>
<dbReference type="GO" id="GO:0045542">
    <property type="term" value="P:positive regulation of cholesterol biosynthetic process"/>
    <property type="evidence" value="ECO:0000315"/>
    <property type="project" value="BHF-UCL"/>
</dbReference>
<dbReference type="GO" id="GO:0010875">
    <property type="term" value="P:positive regulation of cholesterol efflux"/>
    <property type="evidence" value="ECO:0000314"/>
    <property type="project" value="BHF-UCL"/>
</dbReference>
<dbReference type="GO" id="GO:0006355">
    <property type="term" value="P:regulation of DNA-templated transcription"/>
    <property type="evidence" value="ECO:0000315"/>
    <property type="project" value="BHF-UCL"/>
</dbReference>
<dbReference type="GO" id="GO:0015918">
    <property type="term" value="P:sterol transport"/>
    <property type="evidence" value="ECO:0000315"/>
    <property type="project" value="UniProtKB"/>
</dbReference>
<dbReference type="CDD" id="cd03213">
    <property type="entry name" value="ABCG_EPDR"/>
    <property type="match status" value="1"/>
</dbReference>
<dbReference type="FunFam" id="3.40.50.300:FF:000267">
    <property type="entry name" value="ATP-binding cassette, sub-family G (WHITE), member 1"/>
    <property type="match status" value="1"/>
</dbReference>
<dbReference type="Gene3D" id="3.40.50.300">
    <property type="entry name" value="P-loop containing nucleotide triphosphate hydrolases"/>
    <property type="match status" value="1"/>
</dbReference>
<dbReference type="InterPro" id="IPR003593">
    <property type="entry name" value="AAA+_ATPase"/>
</dbReference>
<dbReference type="InterPro" id="IPR013525">
    <property type="entry name" value="ABC2_TM"/>
</dbReference>
<dbReference type="InterPro" id="IPR003439">
    <property type="entry name" value="ABC_transporter-like_ATP-bd"/>
</dbReference>
<dbReference type="InterPro" id="IPR017871">
    <property type="entry name" value="ABC_transporter-like_CS"/>
</dbReference>
<dbReference type="InterPro" id="IPR043926">
    <property type="entry name" value="ABCG_dom"/>
</dbReference>
<dbReference type="InterPro" id="IPR050352">
    <property type="entry name" value="ABCG_transporters"/>
</dbReference>
<dbReference type="InterPro" id="IPR027417">
    <property type="entry name" value="P-loop_NTPase"/>
</dbReference>
<dbReference type="PANTHER" id="PTHR48041">
    <property type="entry name" value="ABC TRANSPORTER G FAMILY MEMBER 28"/>
    <property type="match status" value="1"/>
</dbReference>
<dbReference type="PANTHER" id="PTHR48041:SF75">
    <property type="entry name" value="ATP-BINDING CASSETTE SUB-FAMILY G MEMBER 4"/>
    <property type="match status" value="1"/>
</dbReference>
<dbReference type="Pfam" id="PF01061">
    <property type="entry name" value="ABC2_membrane"/>
    <property type="match status" value="1"/>
</dbReference>
<dbReference type="Pfam" id="PF19055">
    <property type="entry name" value="ABC2_membrane_7"/>
    <property type="match status" value="1"/>
</dbReference>
<dbReference type="Pfam" id="PF00005">
    <property type="entry name" value="ABC_tran"/>
    <property type="match status" value="1"/>
</dbReference>
<dbReference type="SMART" id="SM00382">
    <property type="entry name" value="AAA"/>
    <property type="match status" value="1"/>
</dbReference>
<dbReference type="SUPFAM" id="SSF52540">
    <property type="entry name" value="P-loop containing nucleoside triphosphate hydrolases"/>
    <property type="match status" value="1"/>
</dbReference>
<dbReference type="PROSITE" id="PS00211">
    <property type="entry name" value="ABC_TRANSPORTER_1"/>
    <property type="match status" value="1"/>
</dbReference>
<dbReference type="PROSITE" id="PS50893">
    <property type="entry name" value="ABC_TRANSPORTER_2"/>
    <property type="match status" value="1"/>
</dbReference>
<proteinExistence type="evidence at protein level"/>
<keyword id="KW-0067">ATP-binding</keyword>
<keyword id="KW-1003">Cell membrane</keyword>
<keyword id="KW-0968">Cytoplasmic vesicle</keyword>
<keyword id="KW-0967">Endosome</keyword>
<keyword id="KW-0472">Membrane</keyword>
<keyword id="KW-0547">Nucleotide-binding</keyword>
<keyword id="KW-1185">Reference proteome</keyword>
<keyword id="KW-1278">Translocase</keyword>
<keyword id="KW-0812">Transmembrane</keyword>
<keyword id="KW-1133">Transmembrane helix</keyword>
<keyword id="KW-0813">Transport</keyword>
<gene>
    <name evidence="16" type="primary">Abcg4</name>
    <name evidence="12" type="synonym">White2</name>
</gene>
<organism>
    <name type="scientific">Mus musculus</name>
    <name type="common">Mouse</name>
    <dbReference type="NCBI Taxonomy" id="10090"/>
    <lineage>
        <taxon>Eukaryota</taxon>
        <taxon>Metazoa</taxon>
        <taxon>Chordata</taxon>
        <taxon>Craniata</taxon>
        <taxon>Vertebrata</taxon>
        <taxon>Euteleostomi</taxon>
        <taxon>Mammalia</taxon>
        <taxon>Eutheria</taxon>
        <taxon>Euarchontoglires</taxon>
        <taxon>Glires</taxon>
        <taxon>Rodentia</taxon>
        <taxon>Myomorpha</taxon>
        <taxon>Muroidea</taxon>
        <taxon>Muridae</taxon>
        <taxon>Murinae</taxon>
        <taxon>Mus</taxon>
        <taxon>Mus</taxon>
    </lineage>
</organism>
<comment type="function">
    <text evidence="2 7 8 9 11">ATP-dependent transporter of the ATP-binding cassette (ABC) family that may be involved in the cellular efflux of sterols, in particular cholesterol and desmosterol (a cholesterol precursor), to high-density lipoprotein (HDL) (PubMed:15210959, PubMed:17916878, PubMed:18039927). May play an important role in the removal of amyloid-beta peptides from brain, in a process that can be antagonized by desmosterol. However it is unclear whether ABCG4 can directly transport amyloid-beta peptides or whether peptide export may be facilitated due to changes in the membrane lipid environment (PubMed:29042617). Induces apoptosis in various cells (By similarity).</text>
</comment>
<comment type="catalytic activity">
    <reaction evidence="7 8 9">
        <text>cholesterol(in) + ATP + H2O = cholesterol(out) + ADP + phosphate + H(+)</text>
        <dbReference type="Rhea" id="RHEA:39051"/>
        <dbReference type="ChEBI" id="CHEBI:15377"/>
        <dbReference type="ChEBI" id="CHEBI:15378"/>
        <dbReference type="ChEBI" id="CHEBI:16113"/>
        <dbReference type="ChEBI" id="CHEBI:30616"/>
        <dbReference type="ChEBI" id="CHEBI:43474"/>
        <dbReference type="ChEBI" id="CHEBI:456216"/>
    </reaction>
    <physiologicalReaction direction="left-to-right" evidence="14 15">
        <dbReference type="Rhea" id="RHEA:39052"/>
    </physiologicalReaction>
</comment>
<comment type="catalytic activity">
    <reaction evidence="9">
        <text>desmosterol(in) + ATP + H2O = desmosterol(out) + ADP + phosphate + H(+)</text>
        <dbReference type="Rhea" id="RHEA:67932"/>
        <dbReference type="ChEBI" id="CHEBI:15377"/>
        <dbReference type="ChEBI" id="CHEBI:15378"/>
        <dbReference type="ChEBI" id="CHEBI:17737"/>
        <dbReference type="ChEBI" id="CHEBI:30616"/>
        <dbReference type="ChEBI" id="CHEBI:43474"/>
        <dbReference type="ChEBI" id="CHEBI:456216"/>
    </reaction>
    <physiologicalReaction direction="left-to-right" evidence="15">
        <dbReference type="Rhea" id="RHEA:67933"/>
    </physiologicalReaction>
</comment>
<comment type="subunit">
    <text evidence="2">Half-transporter that forms a functional transporter via homo- or heterodimerization. Homodimer. Heterodimers with ABCG1.</text>
</comment>
<comment type="subcellular location">
    <subcellularLocation>
        <location evidence="2">Cell membrane</location>
        <topology evidence="3">Multi-pass membrane protein</topology>
    </subcellularLocation>
    <subcellularLocation>
        <location evidence="8">Cytoplasmic vesicle membrane</location>
        <topology evidence="3">Multi-pass membrane protein</topology>
    </subcellularLocation>
    <subcellularLocation>
        <location evidence="8">Endosome membrane</location>
        <topology evidence="3">Multi-pass membrane protein</topology>
    </subcellularLocation>
</comment>
<comment type="tissue specificity">
    <text evidence="5 6 8 9 11">Highly expressed in the brain, in particular in neurons, microglia and astrocytes (PubMed:11856881, PubMed:12183068, PubMed:17916878, PubMed:18039927). Expressed on blood brain barrier endothelial cells (PubMed:29042617). Expressed in the spleen (PubMed:11856881).</text>
</comment>
<comment type="developmental stage">
    <text evidence="10">Highly but transiently expressed in enterocytes and hemopoietic cells populating the liver during development, but is absent when animals are fully developed. Highly expressed in the eyes of the developing embryos as early as 12.5 dpc and developing CNS.</text>
</comment>
<comment type="disruption phenotype">
    <text evidence="9 10">Abcg4 deficiency does not significantly affect the levels of sterols in the brain except for brain lathosterol levels, which are slightly elevated (PubMed:18039927). Abcg1/Abcg4 double knockout mice display significant accumulation of 24(S)-hydroxycholesterol (24S-HC) and 27-hydroxy-cholesterol (27-HC) in addition to the cholesterol synthesis intermediates, desmosterol, lanosterol and lathosterol (PubMed:18039927, PubMed:19633360).</text>
</comment>
<comment type="miscellaneous">
    <text evidence="1 2 8">Whether ABCG4 is an LXR target gene, is still under debate. Studies performed in monocytes, and in one astrocyte cell line indicated that ABCG4 expression could be up-regulated by oxysterols and other LXR ligands (By similarity). However, subsequent observations in a number of different cell types (primary mouse cells, oligodendrocytes and neuron-like cell lines) have not confirmed this observation (By similarity) (PubMed:17916878).</text>
</comment>
<comment type="similarity">
    <text evidence="13">Belongs to the ABC transporter superfamily. ABCG family. Eye pigment precursor importer (TC 3.A.1.204) subfamily.</text>
</comment>